<proteinExistence type="inferred from homology"/>
<comment type="function">
    <text>Capsid protein self-assembles to form an icosahedral capsid with a T=3 symmetry, about 28-34 nm in diameter, and consisting of 180 capsid proteins.</text>
</comment>
<comment type="subunit">
    <text evidence="2">Homomultimer.</text>
</comment>
<comment type="subcellular location">
    <subcellularLocation>
        <location evidence="2">Virion</location>
    </subcellularLocation>
</comment>
<comment type="similarity">
    <text evidence="2">Belongs to the icosahedral plant coat protein family.</text>
</comment>
<evidence type="ECO:0000256" key="1">
    <source>
        <dbReference type="SAM" id="MobiDB-lite"/>
    </source>
</evidence>
<evidence type="ECO:0000305" key="2"/>
<accession>P11642</accession>
<dbReference type="EMBL" id="X14736">
    <property type="protein sequence ID" value="CAA32864.1"/>
    <property type="molecule type" value="Genomic_RNA"/>
</dbReference>
<dbReference type="PIR" id="JQ0061">
    <property type="entry name" value="JQ0061"/>
</dbReference>
<dbReference type="RefSeq" id="NP_619722.1">
    <property type="nucleotide sequence ID" value="NC_003627.1"/>
</dbReference>
<dbReference type="SMR" id="P11642"/>
<dbReference type="Proteomes" id="UP000007071">
    <property type="component" value="Segment"/>
</dbReference>
<dbReference type="GO" id="GO:0039617">
    <property type="term" value="C:T=3 icosahedral viral capsid"/>
    <property type="evidence" value="ECO:0007669"/>
    <property type="project" value="UniProtKB-KW"/>
</dbReference>
<dbReference type="GO" id="GO:0003723">
    <property type="term" value="F:RNA binding"/>
    <property type="evidence" value="ECO:0007669"/>
    <property type="project" value="UniProtKB-KW"/>
</dbReference>
<dbReference type="GO" id="GO:0005198">
    <property type="term" value="F:structural molecule activity"/>
    <property type="evidence" value="ECO:0007669"/>
    <property type="project" value="InterPro"/>
</dbReference>
<dbReference type="Gene3D" id="2.60.120.20">
    <property type="match status" value="1"/>
</dbReference>
<dbReference type="InterPro" id="IPR000937">
    <property type="entry name" value="Capsid_prot_S-dom_vir"/>
</dbReference>
<dbReference type="InterPro" id="IPR029053">
    <property type="entry name" value="Viral_coat"/>
</dbReference>
<dbReference type="Pfam" id="PF00729">
    <property type="entry name" value="Viral_coat"/>
    <property type="match status" value="1"/>
</dbReference>
<dbReference type="SUPFAM" id="SSF88633">
    <property type="entry name" value="Positive stranded ssRNA viruses"/>
    <property type="match status" value="1"/>
</dbReference>
<dbReference type="PROSITE" id="PS00555">
    <property type="entry name" value="ICOSAH_VIR_COAT_S"/>
    <property type="match status" value="1"/>
</dbReference>
<feature type="chain" id="PRO_0000222863" description="Capsid protein">
    <location>
        <begin position="1"/>
        <end position="236"/>
    </location>
</feature>
<feature type="region of interest" description="R domain, interaction with RNA">
    <location>
        <begin position="1"/>
        <end position="51"/>
    </location>
</feature>
<feature type="region of interest" description="Disordered" evidence="1">
    <location>
        <begin position="1"/>
        <end position="46"/>
    </location>
</feature>
<feature type="region of interest" description="S domain, virion shell">
    <location>
        <begin position="52"/>
        <end position="217"/>
    </location>
</feature>
<feature type="region of interest" description="P domain, projecting">
    <location>
        <begin position="218"/>
        <end position="236"/>
    </location>
</feature>
<feature type="compositionally biased region" description="Pro residues" evidence="1">
    <location>
        <begin position="29"/>
        <end position="44"/>
    </location>
</feature>
<gene>
    <name type="ORF">ORF4</name>
</gene>
<sequence>MAASSRSTRGRKQRGRSVEAKSRAIRANPPVPRPNPQRNRPPPAGTTCSMSEILLAVSATTADQILEIPVCAGIDFPAGTSPRYIGAAKWLAAQSQMWNTIVFNSVRITWETFTADTTSGYISMAFLSDYMLSIPTGVEDVARIVPSATIALKNRGPSIVMPQNRTVFRCIQAGQFAALGSAADKQMYSPGRFIVAIPKASATQAVGQIKISYSVSYRGAAILQPALVPGPGLANH</sequence>
<name>CAPSD_MCMVK</name>
<keyword id="KW-0167">Capsid protein</keyword>
<keyword id="KW-1185">Reference proteome</keyword>
<keyword id="KW-0694">RNA-binding</keyword>
<keyword id="KW-1142">T=3 icosahedral capsid protein</keyword>
<keyword id="KW-0946">Virion</keyword>
<organismHost>
    <name type="scientific">Zea mays</name>
    <name type="common">Maize</name>
    <dbReference type="NCBI Taxonomy" id="4577"/>
</organismHost>
<reference key="1">
    <citation type="journal article" date="1989" name="Nucleic Acids Res.">
        <title>The complete nucleotide sequence of the maize chlorotic mottle virus genome.</title>
        <authorList>
            <person name="Nutter R.C."/>
            <person name="Scheets K."/>
            <person name="Panganiban L.C."/>
            <person name="Lommel S.A."/>
        </authorList>
    </citation>
    <scope>NUCLEOTIDE SEQUENCE [GENOMIC RNA]</scope>
</reference>
<protein>
    <recommendedName>
        <fullName>Capsid protein</fullName>
    </recommendedName>
    <alternativeName>
        <fullName>Coat protein</fullName>
    </alternativeName>
    <alternativeName>
        <fullName>p25</fullName>
    </alternativeName>
</protein>
<organism>
    <name type="scientific">Maize chlorotic mottle virus (isolate United States/Kansas/1987)</name>
    <name type="common">MCMV</name>
    <dbReference type="NCBI Taxonomy" id="882210"/>
    <lineage>
        <taxon>Viruses</taxon>
        <taxon>Riboviria</taxon>
        <taxon>Orthornavirae</taxon>
        <taxon>Kitrinoviricota</taxon>
        <taxon>Tolucaviricetes</taxon>
        <taxon>Tolivirales</taxon>
        <taxon>Tombusviridae</taxon>
        <taxon>Procedovirinae</taxon>
        <taxon>Machlomovirus</taxon>
        <taxon>Machlomovirus zeae</taxon>
    </lineage>
</organism>